<organism>
    <name type="scientific">Burkholderia mallei (strain NCTC 10247)</name>
    <dbReference type="NCBI Taxonomy" id="320389"/>
    <lineage>
        <taxon>Bacteria</taxon>
        <taxon>Pseudomonadati</taxon>
        <taxon>Pseudomonadota</taxon>
        <taxon>Betaproteobacteria</taxon>
        <taxon>Burkholderiales</taxon>
        <taxon>Burkholderiaceae</taxon>
        <taxon>Burkholderia</taxon>
        <taxon>pseudomallei group</taxon>
    </lineage>
</organism>
<sequence length="275" mass="30205">MAIVKVKPTSPGRRAMVKVVNKDLHKGKPHAALLDTQSSKAGRNNNGCITTRHQGGGHKQHYRVIDFRRTKDGIPAKVERLEYDPNRSANIALVLYADGERRYIIAPKGVTVGQQLMSGSEAPIRAGNTLPIRNIPVGTTIHCIEMLPGKGAQMARSAGTSAMLLAREGLYAQVRLRSGEIRRVHIECRATIGEVGNEEHSLRQIGKAGANRWRGIRPTVRGVAMNPIDHPHGGGEGRTAAGRDPVSPWGTPTKGFRTRRNKRTTTMIVQRRHKR</sequence>
<comment type="function">
    <text evidence="1">One of the primary rRNA binding proteins. Required for association of the 30S and 50S subunits to form the 70S ribosome, for tRNA binding and peptide bond formation. It has been suggested to have peptidyltransferase activity; this is somewhat controversial. Makes several contacts with the 16S rRNA in the 70S ribosome.</text>
</comment>
<comment type="subunit">
    <text evidence="1">Part of the 50S ribosomal subunit. Forms a bridge to the 30S subunit in the 70S ribosome.</text>
</comment>
<comment type="similarity">
    <text evidence="1">Belongs to the universal ribosomal protein uL2 family.</text>
</comment>
<accession>A3MRV7</accession>
<dbReference type="EMBL" id="CP000548">
    <property type="protein sequence ID" value="ABO06224.1"/>
    <property type="molecule type" value="Genomic_DNA"/>
</dbReference>
<dbReference type="RefSeq" id="WP_004202759.1">
    <property type="nucleotide sequence ID" value="NZ_CP007802.1"/>
</dbReference>
<dbReference type="SMR" id="A3MRV7"/>
<dbReference type="KEGG" id="bmaz:BM44_3038"/>
<dbReference type="KEGG" id="bmn:BMA10247_3481"/>
<dbReference type="PATRIC" id="fig|320389.8.peg.3410"/>
<dbReference type="GO" id="GO:0015934">
    <property type="term" value="C:large ribosomal subunit"/>
    <property type="evidence" value="ECO:0007669"/>
    <property type="project" value="InterPro"/>
</dbReference>
<dbReference type="GO" id="GO:0019843">
    <property type="term" value="F:rRNA binding"/>
    <property type="evidence" value="ECO:0007669"/>
    <property type="project" value="UniProtKB-UniRule"/>
</dbReference>
<dbReference type="GO" id="GO:0003735">
    <property type="term" value="F:structural constituent of ribosome"/>
    <property type="evidence" value="ECO:0007669"/>
    <property type="project" value="InterPro"/>
</dbReference>
<dbReference type="GO" id="GO:0016740">
    <property type="term" value="F:transferase activity"/>
    <property type="evidence" value="ECO:0007669"/>
    <property type="project" value="InterPro"/>
</dbReference>
<dbReference type="GO" id="GO:0002181">
    <property type="term" value="P:cytoplasmic translation"/>
    <property type="evidence" value="ECO:0007669"/>
    <property type="project" value="TreeGrafter"/>
</dbReference>
<dbReference type="FunFam" id="2.30.30.30:FF:000001">
    <property type="entry name" value="50S ribosomal protein L2"/>
    <property type="match status" value="1"/>
</dbReference>
<dbReference type="FunFam" id="2.40.50.140:FF:000003">
    <property type="entry name" value="50S ribosomal protein L2"/>
    <property type="match status" value="1"/>
</dbReference>
<dbReference type="FunFam" id="4.10.950.10:FF:000001">
    <property type="entry name" value="50S ribosomal protein L2"/>
    <property type="match status" value="1"/>
</dbReference>
<dbReference type="Gene3D" id="2.30.30.30">
    <property type="match status" value="1"/>
</dbReference>
<dbReference type="Gene3D" id="2.40.50.140">
    <property type="entry name" value="Nucleic acid-binding proteins"/>
    <property type="match status" value="1"/>
</dbReference>
<dbReference type="Gene3D" id="4.10.950.10">
    <property type="entry name" value="Ribosomal protein L2, domain 3"/>
    <property type="match status" value="1"/>
</dbReference>
<dbReference type="HAMAP" id="MF_01320_B">
    <property type="entry name" value="Ribosomal_uL2_B"/>
    <property type="match status" value="1"/>
</dbReference>
<dbReference type="InterPro" id="IPR012340">
    <property type="entry name" value="NA-bd_OB-fold"/>
</dbReference>
<dbReference type="InterPro" id="IPR014722">
    <property type="entry name" value="Rib_uL2_dom2"/>
</dbReference>
<dbReference type="InterPro" id="IPR002171">
    <property type="entry name" value="Ribosomal_uL2"/>
</dbReference>
<dbReference type="InterPro" id="IPR005880">
    <property type="entry name" value="Ribosomal_uL2_bac/org-type"/>
</dbReference>
<dbReference type="InterPro" id="IPR022669">
    <property type="entry name" value="Ribosomal_uL2_C"/>
</dbReference>
<dbReference type="InterPro" id="IPR022671">
    <property type="entry name" value="Ribosomal_uL2_CS"/>
</dbReference>
<dbReference type="InterPro" id="IPR014726">
    <property type="entry name" value="Ribosomal_uL2_dom3"/>
</dbReference>
<dbReference type="InterPro" id="IPR022666">
    <property type="entry name" value="Ribosomal_uL2_RNA-bd_dom"/>
</dbReference>
<dbReference type="InterPro" id="IPR008991">
    <property type="entry name" value="Translation_prot_SH3-like_sf"/>
</dbReference>
<dbReference type="NCBIfam" id="TIGR01171">
    <property type="entry name" value="rplB_bact"/>
    <property type="match status" value="1"/>
</dbReference>
<dbReference type="PANTHER" id="PTHR13691:SF5">
    <property type="entry name" value="LARGE RIBOSOMAL SUBUNIT PROTEIN UL2M"/>
    <property type="match status" value="1"/>
</dbReference>
<dbReference type="PANTHER" id="PTHR13691">
    <property type="entry name" value="RIBOSOMAL PROTEIN L2"/>
    <property type="match status" value="1"/>
</dbReference>
<dbReference type="Pfam" id="PF00181">
    <property type="entry name" value="Ribosomal_L2"/>
    <property type="match status" value="1"/>
</dbReference>
<dbReference type="Pfam" id="PF03947">
    <property type="entry name" value="Ribosomal_L2_C"/>
    <property type="match status" value="1"/>
</dbReference>
<dbReference type="PIRSF" id="PIRSF002158">
    <property type="entry name" value="Ribosomal_L2"/>
    <property type="match status" value="1"/>
</dbReference>
<dbReference type="SMART" id="SM01383">
    <property type="entry name" value="Ribosomal_L2"/>
    <property type="match status" value="1"/>
</dbReference>
<dbReference type="SMART" id="SM01382">
    <property type="entry name" value="Ribosomal_L2_C"/>
    <property type="match status" value="1"/>
</dbReference>
<dbReference type="SUPFAM" id="SSF50249">
    <property type="entry name" value="Nucleic acid-binding proteins"/>
    <property type="match status" value="1"/>
</dbReference>
<dbReference type="SUPFAM" id="SSF50104">
    <property type="entry name" value="Translation proteins SH3-like domain"/>
    <property type="match status" value="1"/>
</dbReference>
<dbReference type="PROSITE" id="PS00467">
    <property type="entry name" value="RIBOSOMAL_L2"/>
    <property type="match status" value="1"/>
</dbReference>
<feature type="chain" id="PRO_0000309884" description="Large ribosomal subunit protein uL2">
    <location>
        <begin position="1"/>
        <end position="275"/>
    </location>
</feature>
<feature type="region of interest" description="Disordered" evidence="2">
    <location>
        <begin position="224"/>
        <end position="257"/>
    </location>
</feature>
<protein>
    <recommendedName>
        <fullName evidence="1">Large ribosomal subunit protein uL2</fullName>
    </recommendedName>
    <alternativeName>
        <fullName evidence="3">50S ribosomal protein L2</fullName>
    </alternativeName>
</protein>
<reference key="1">
    <citation type="journal article" date="2010" name="Genome Biol. Evol.">
        <title>Continuing evolution of Burkholderia mallei through genome reduction and large-scale rearrangements.</title>
        <authorList>
            <person name="Losada L."/>
            <person name="Ronning C.M."/>
            <person name="DeShazer D."/>
            <person name="Woods D."/>
            <person name="Fedorova N."/>
            <person name="Kim H.S."/>
            <person name="Shabalina S.A."/>
            <person name="Pearson T.R."/>
            <person name="Brinkac L."/>
            <person name="Tan P."/>
            <person name="Nandi T."/>
            <person name="Crabtree J."/>
            <person name="Badger J."/>
            <person name="Beckstrom-Sternberg S."/>
            <person name="Saqib M."/>
            <person name="Schutzer S.E."/>
            <person name="Keim P."/>
            <person name="Nierman W.C."/>
        </authorList>
    </citation>
    <scope>NUCLEOTIDE SEQUENCE [LARGE SCALE GENOMIC DNA]</scope>
    <source>
        <strain>NCTC 10247</strain>
    </source>
</reference>
<proteinExistence type="inferred from homology"/>
<keyword id="KW-0687">Ribonucleoprotein</keyword>
<keyword id="KW-0689">Ribosomal protein</keyword>
<keyword id="KW-0694">RNA-binding</keyword>
<keyword id="KW-0699">rRNA-binding</keyword>
<gene>
    <name evidence="1" type="primary">rplB</name>
    <name type="ordered locus">BMA10247_3481</name>
</gene>
<evidence type="ECO:0000255" key="1">
    <source>
        <dbReference type="HAMAP-Rule" id="MF_01320"/>
    </source>
</evidence>
<evidence type="ECO:0000256" key="2">
    <source>
        <dbReference type="SAM" id="MobiDB-lite"/>
    </source>
</evidence>
<evidence type="ECO:0000305" key="3"/>
<name>RL2_BURM7</name>